<comment type="catalytic activity">
    <reaction>
        <text>acetate + ATP + CoA = acetyl-CoA + AMP + diphosphate</text>
        <dbReference type="Rhea" id="RHEA:23176"/>
        <dbReference type="ChEBI" id="CHEBI:30089"/>
        <dbReference type="ChEBI" id="CHEBI:30616"/>
        <dbReference type="ChEBI" id="CHEBI:33019"/>
        <dbReference type="ChEBI" id="CHEBI:57287"/>
        <dbReference type="ChEBI" id="CHEBI:57288"/>
        <dbReference type="ChEBI" id="CHEBI:456215"/>
        <dbReference type="EC" id="6.2.1.1"/>
    </reaction>
</comment>
<comment type="similarity">
    <text evidence="2">Belongs to the ATP-dependent AMP-binding enzyme family.</text>
</comment>
<gene>
    <name type="primary">ACS2</name>
    <name type="ordered locus">AGL148C</name>
</gene>
<dbReference type="EC" id="6.2.1.1"/>
<dbReference type="EMBL" id="AE016820">
    <property type="protein sequence ID" value="AAS54343.1"/>
    <property type="molecule type" value="Genomic_DNA"/>
</dbReference>
<dbReference type="RefSeq" id="NP_986519.1">
    <property type="nucleotide sequence ID" value="NM_211581.1"/>
</dbReference>
<dbReference type="SMR" id="Q750T7"/>
<dbReference type="FunCoup" id="Q750T7">
    <property type="interactions" value="764"/>
</dbReference>
<dbReference type="STRING" id="284811.Q750T7"/>
<dbReference type="EnsemblFungi" id="AAS54343">
    <property type="protein sequence ID" value="AAS54343"/>
    <property type="gene ID" value="AGOS_AGL148C"/>
</dbReference>
<dbReference type="GeneID" id="4622812"/>
<dbReference type="KEGG" id="ago:AGOS_AGL148C"/>
<dbReference type="eggNOG" id="KOG1175">
    <property type="taxonomic scope" value="Eukaryota"/>
</dbReference>
<dbReference type="HOGENOM" id="CLU_000022_3_6_1"/>
<dbReference type="InParanoid" id="Q750T7"/>
<dbReference type="OMA" id="TVHTKKI"/>
<dbReference type="OrthoDB" id="1706066at2759"/>
<dbReference type="Proteomes" id="UP000000591">
    <property type="component" value="Chromosome VII"/>
</dbReference>
<dbReference type="GO" id="GO:0005829">
    <property type="term" value="C:cytosol"/>
    <property type="evidence" value="ECO:0000318"/>
    <property type="project" value="GO_Central"/>
</dbReference>
<dbReference type="GO" id="GO:0005730">
    <property type="term" value="C:nucleolus"/>
    <property type="evidence" value="ECO:0007669"/>
    <property type="project" value="EnsemblFungi"/>
</dbReference>
<dbReference type="GO" id="GO:0003987">
    <property type="term" value="F:acetate-CoA ligase activity"/>
    <property type="evidence" value="ECO:0000318"/>
    <property type="project" value="GO_Central"/>
</dbReference>
<dbReference type="GO" id="GO:0016880">
    <property type="term" value="F:acid-ammonia (or amide) ligase activity"/>
    <property type="evidence" value="ECO:0007669"/>
    <property type="project" value="EnsemblFungi"/>
</dbReference>
<dbReference type="GO" id="GO:0016208">
    <property type="term" value="F:AMP binding"/>
    <property type="evidence" value="ECO:0007669"/>
    <property type="project" value="InterPro"/>
</dbReference>
<dbReference type="GO" id="GO:0005524">
    <property type="term" value="F:ATP binding"/>
    <property type="evidence" value="ECO:0007669"/>
    <property type="project" value="UniProtKB-KW"/>
</dbReference>
<dbReference type="GO" id="GO:0006085">
    <property type="term" value="P:acetyl-CoA biosynthetic process"/>
    <property type="evidence" value="ECO:0000318"/>
    <property type="project" value="GO_Central"/>
</dbReference>
<dbReference type="GO" id="GO:0019427">
    <property type="term" value="P:acetyl-CoA biosynthetic process from acetate"/>
    <property type="evidence" value="ECO:0007669"/>
    <property type="project" value="InterPro"/>
</dbReference>
<dbReference type="CDD" id="cd05966">
    <property type="entry name" value="ACS"/>
    <property type="match status" value="1"/>
</dbReference>
<dbReference type="FunFam" id="3.40.50.12780:FF:000001">
    <property type="entry name" value="Acetyl-coenzyme A synthetase"/>
    <property type="match status" value="1"/>
</dbReference>
<dbReference type="Gene3D" id="3.30.300.30">
    <property type="match status" value="1"/>
</dbReference>
<dbReference type="Gene3D" id="3.40.50.12780">
    <property type="entry name" value="N-terminal domain of ligase-like"/>
    <property type="match status" value="1"/>
</dbReference>
<dbReference type="InterPro" id="IPR011904">
    <property type="entry name" value="Ac_CoA_lig"/>
</dbReference>
<dbReference type="InterPro" id="IPR032387">
    <property type="entry name" value="ACAS_N"/>
</dbReference>
<dbReference type="InterPro" id="IPR025110">
    <property type="entry name" value="AMP-bd_C"/>
</dbReference>
<dbReference type="InterPro" id="IPR045851">
    <property type="entry name" value="AMP-bd_C_sf"/>
</dbReference>
<dbReference type="InterPro" id="IPR020845">
    <property type="entry name" value="AMP-binding_CS"/>
</dbReference>
<dbReference type="InterPro" id="IPR000873">
    <property type="entry name" value="AMP-dep_synth/lig_dom"/>
</dbReference>
<dbReference type="InterPro" id="IPR042099">
    <property type="entry name" value="ANL_N_sf"/>
</dbReference>
<dbReference type="NCBIfam" id="TIGR02188">
    <property type="entry name" value="Ac_CoA_lig_AcsA"/>
    <property type="match status" value="1"/>
</dbReference>
<dbReference type="NCBIfam" id="NF001208">
    <property type="entry name" value="PRK00174.1"/>
    <property type="match status" value="1"/>
</dbReference>
<dbReference type="PANTHER" id="PTHR24095">
    <property type="entry name" value="ACETYL-COENZYME A SYNTHETASE"/>
    <property type="match status" value="1"/>
</dbReference>
<dbReference type="PANTHER" id="PTHR24095:SF245">
    <property type="entry name" value="ACETYL-COENZYME A SYNTHETASE 2"/>
    <property type="match status" value="1"/>
</dbReference>
<dbReference type="Pfam" id="PF16177">
    <property type="entry name" value="ACAS_N"/>
    <property type="match status" value="1"/>
</dbReference>
<dbReference type="Pfam" id="PF00501">
    <property type="entry name" value="AMP-binding"/>
    <property type="match status" value="1"/>
</dbReference>
<dbReference type="Pfam" id="PF13193">
    <property type="entry name" value="AMP-binding_C"/>
    <property type="match status" value="1"/>
</dbReference>
<dbReference type="SUPFAM" id="SSF56801">
    <property type="entry name" value="Acetyl-CoA synthetase-like"/>
    <property type="match status" value="1"/>
</dbReference>
<dbReference type="PROSITE" id="PS00455">
    <property type="entry name" value="AMP_BINDING"/>
    <property type="match status" value="1"/>
</dbReference>
<evidence type="ECO:0000250" key="1"/>
<evidence type="ECO:0000305" key="2"/>
<keyword id="KW-0067">ATP-binding</keyword>
<keyword id="KW-0436">Ligase</keyword>
<keyword id="KW-0547">Nucleotide-binding</keyword>
<keyword id="KW-1185">Reference proteome</keyword>
<protein>
    <recommendedName>
        <fullName>Acetyl-coenzyme A synthetase 2</fullName>
        <ecNumber>6.2.1.1</ecNumber>
    </recommendedName>
    <alternativeName>
        <fullName>Acetate--CoA ligase 2</fullName>
    </alternativeName>
    <alternativeName>
        <fullName>Acyl-activating enzyme 2</fullName>
    </alternativeName>
</protein>
<accession>Q750T7</accession>
<organism>
    <name type="scientific">Eremothecium gossypii (strain ATCC 10895 / CBS 109.51 / FGSC 9923 / NRRL Y-1056)</name>
    <name type="common">Yeast</name>
    <name type="synonym">Ashbya gossypii</name>
    <dbReference type="NCBI Taxonomy" id="284811"/>
    <lineage>
        <taxon>Eukaryota</taxon>
        <taxon>Fungi</taxon>
        <taxon>Dikarya</taxon>
        <taxon>Ascomycota</taxon>
        <taxon>Saccharomycotina</taxon>
        <taxon>Saccharomycetes</taxon>
        <taxon>Saccharomycetales</taxon>
        <taxon>Saccharomycetaceae</taxon>
        <taxon>Eremothecium</taxon>
    </lineage>
</organism>
<proteinExistence type="inferred from homology"/>
<reference key="1">
    <citation type="journal article" date="2004" name="Science">
        <title>The Ashbya gossypii genome as a tool for mapping the ancient Saccharomyces cerevisiae genome.</title>
        <authorList>
            <person name="Dietrich F.S."/>
            <person name="Voegeli S."/>
            <person name="Brachat S."/>
            <person name="Lerch A."/>
            <person name="Gates K."/>
            <person name="Steiner S."/>
            <person name="Mohr C."/>
            <person name="Poehlmann R."/>
            <person name="Luedi P."/>
            <person name="Choi S."/>
            <person name="Wing R.A."/>
            <person name="Flavier A."/>
            <person name="Gaffney T.D."/>
            <person name="Philippsen P."/>
        </authorList>
    </citation>
    <scope>NUCLEOTIDE SEQUENCE [LARGE SCALE GENOMIC DNA]</scope>
    <source>
        <strain>ATCC 10895 / CBS 109.51 / FGSC 9923 / NRRL Y-1056</strain>
    </source>
</reference>
<reference key="2">
    <citation type="journal article" date="2013" name="G3 (Bethesda)">
        <title>Genomes of Ashbya fungi isolated from insects reveal four mating-type loci, numerous translocations, lack of transposons, and distinct gene duplications.</title>
        <authorList>
            <person name="Dietrich F.S."/>
            <person name="Voegeli S."/>
            <person name="Kuo S."/>
            <person name="Philippsen P."/>
        </authorList>
    </citation>
    <scope>GENOME REANNOTATION</scope>
    <source>
        <strain>ATCC 10895 / CBS 109.51 / FGSC 9923 / NRRL Y-1056</strain>
    </source>
</reference>
<feature type="chain" id="PRO_0000208404" description="Acetyl-coenzyme A synthetase 2">
    <location>
        <begin position="1"/>
        <end position="687"/>
    </location>
</feature>
<feature type="binding site" evidence="1">
    <location>
        <begin position="206"/>
        <end position="209"/>
    </location>
    <ligand>
        <name>CoA</name>
        <dbReference type="ChEBI" id="CHEBI:57287"/>
    </ligand>
</feature>
<feature type="binding site" evidence="1">
    <location>
        <position position="325"/>
    </location>
    <ligand>
        <name>CoA</name>
        <dbReference type="ChEBI" id="CHEBI:57287"/>
    </ligand>
</feature>
<feature type="binding site" evidence="1">
    <location>
        <begin position="401"/>
        <end position="403"/>
    </location>
    <ligand>
        <name>ATP</name>
        <dbReference type="ChEBI" id="CHEBI:30616"/>
    </ligand>
</feature>
<feature type="binding site" evidence="1">
    <location>
        <begin position="425"/>
        <end position="430"/>
    </location>
    <ligand>
        <name>ATP</name>
        <dbReference type="ChEBI" id="CHEBI:30616"/>
    </ligand>
</feature>
<feature type="binding site" evidence="1">
    <location>
        <position position="516"/>
    </location>
    <ligand>
        <name>ATP</name>
        <dbReference type="ChEBI" id="CHEBI:30616"/>
    </ligand>
</feature>
<feature type="binding site" evidence="1">
    <location>
        <position position="531"/>
    </location>
    <ligand>
        <name>ATP</name>
        <dbReference type="ChEBI" id="CHEBI:30616"/>
    </ligand>
</feature>
<feature type="binding site" evidence="1">
    <location>
        <position position="539"/>
    </location>
    <ligand>
        <name>CoA</name>
        <dbReference type="ChEBI" id="CHEBI:57287"/>
    </ligand>
</feature>
<feature type="binding site" evidence="1">
    <location>
        <position position="542"/>
    </location>
    <ligand>
        <name>ATP</name>
        <dbReference type="ChEBI" id="CHEBI:30616"/>
    </ligand>
</feature>
<feature type="binding site" evidence="1">
    <location>
        <position position="617"/>
    </location>
    <ligand>
        <name>CoA</name>
        <dbReference type="ChEBI" id="CHEBI:57287"/>
    </ligand>
</feature>
<name>ACS2_EREGS</name>
<sequence length="687" mass="75369">MSCKEHKVVHEAHNVEARKTPDHFYRSQPGPSYVQDIEQYRTMYQQSIEDPDAFFGEKAREFLHWEKDFTHVRAGSLRTGDTAWFLNGELNAAYNCVDRHALENPDKVAIIYEADDEADNRVVTFGELLRQVSQVAGVLQSWGVKKGDTVAVYMPMIPEAVVAMLAVARLGAVHSVIFAGFSSGSLRDRIVDAESKVVITCDEGRRGGKTVHTKKIVDEGLAGVGVVSHILVFQRTGSEGIPMKAGRDFWWHEEVRKQRGYLPPVSVNAEDPIFLLYTSGSTGSPKGVVHTTGGYLLGAALTTRYVFDIHPEDVLFTAGDVGWITGHTYALYGPLCLGTATIIFESTPAYPDYGRYWRIIQRHKATHFYVAPTAMRLIKTVGEQEISKYDLSSLRVLGSVGEPIAPDLWEWYNEKVGNNNCVVCDTMWQTESGSHLIAPLAGAIPTKPGSATVPFFGINACIIDPVTGDELEGNDVEGVLAIKSPWPSMARSVWNNHDRYIETYLKPYPGYYFTGDGAGRDHDGYYWIRGRVDDVVNVSGHRLSTAEIEAALSEHEGVSQAAVVGIADELTGQAVVAFVSLKEGYGRGSSTDTDPESIAPDVVPLDTLRRELVLQVRAEIGPFAAPKSVIVVDDLPKTRSGKIMRRTLRKISANEADQLGDLSTLANPETVPAIIAAVGAQFLKGKK</sequence>